<feature type="chain" id="PRO_1000000155" description="Ribosome-binding factor A">
    <location>
        <begin position="1"/>
        <end position="126"/>
    </location>
</feature>
<accession>Q2Y7W3</accession>
<reference key="1">
    <citation type="submission" date="2005-08" db="EMBL/GenBank/DDBJ databases">
        <title>Complete sequence of chromosome 1 of Nitrosospira multiformis ATCC 25196.</title>
        <authorList>
            <person name="Copeland A."/>
            <person name="Lucas S."/>
            <person name="Lapidus A."/>
            <person name="Barry K."/>
            <person name="Detter J.C."/>
            <person name="Glavina T."/>
            <person name="Hammon N."/>
            <person name="Israni S."/>
            <person name="Pitluck S."/>
            <person name="Chain P."/>
            <person name="Malfatti S."/>
            <person name="Shin M."/>
            <person name="Vergez L."/>
            <person name="Schmutz J."/>
            <person name="Larimer F."/>
            <person name="Land M."/>
            <person name="Hauser L."/>
            <person name="Kyrpides N."/>
            <person name="Lykidis A."/>
            <person name="Richardson P."/>
        </authorList>
    </citation>
    <scope>NUCLEOTIDE SEQUENCE [LARGE SCALE GENOMIC DNA]</scope>
    <source>
        <strain>ATCC 25196 / NCIMB 11849 / C 71</strain>
    </source>
</reference>
<sequence length="126" mass="14512">MPKDYSRTLRIADQIQRELADLIRNELKDPRIGMITLTGVEVSQDYAHAKVFYTTLHNESDNFLVQNGLENAAGFLRTQLLHRLKLRVIPQLHFIYDESIERGVRLSQLIDEAVASDRSEKETDST</sequence>
<keyword id="KW-0963">Cytoplasm</keyword>
<keyword id="KW-1185">Reference proteome</keyword>
<keyword id="KW-0690">Ribosome biogenesis</keyword>
<name>RBFA_NITMU</name>
<dbReference type="EMBL" id="CP000103">
    <property type="protein sequence ID" value="ABB75158.1"/>
    <property type="molecule type" value="Genomic_DNA"/>
</dbReference>
<dbReference type="RefSeq" id="WP_011381178.1">
    <property type="nucleotide sequence ID" value="NC_007614.1"/>
</dbReference>
<dbReference type="SMR" id="Q2Y7W3"/>
<dbReference type="STRING" id="323848.Nmul_A1863"/>
<dbReference type="KEGG" id="nmu:Nmul_A1863"/>
<dbReference type="eggNOG" id="COG0858">
    <property type="taxonomic scope" value="Bacteria"/>
</dbReference>
<dbReference type="HOGENOM" id="CLU_089475_5_0_4"/>
<dbReference type="OrthoDB" id="307788at2"/>
<dbReference type="Proteomes" id="UP000002718">
    <property type="component" value="Chromosome"/>
</dbReference>
<dbReference type="GO" id="GO:0005829">
    <property type="term" value="C:cytosol"/>
    <property type="evidence" value="ECO:0007669"/>
    <property type="project" value="TreeGrafter"/>
</dbReference>
<dbReference type="GO" id="GO:0043024">
    <property type="term" value="F:ribosomal small subunit binding"/>
    <property type="evidence" value="ECO:0007669"/>
    <property type="project" value="TreeGrafter"/>
</dbReference>
<dbReference type="GO" id="GO:0030490">
    <property type="term" value="P:maturation of SSU-rRNA"/>
    <property type="evidence" value="ECO:0007669"/>
    <property type="project" value="UniProtKB-UniRule"/>
</dbReference>
<dbReference type="Gene3D" id="3.30.300.20">
    <property type="match status" value="1"/>
</dbReference>
<dbReference type="HAMAP" id="MF_00003">
    <property type="entry name" value="RbfA"/>
    <property type="match status" value="1"/>
</dbReference>
<dbReference type="InterPro" id="IPR015946">
    <property type="entry name" value="KH_dom-like_a/b"/>
</dbReference>
<dbReference type="InterPro" id="IPR000238">
    <property type="entry name" value="RbfA"/>
</dbReference>
<dbReference type="InterPro" id="IPR023799">
    <property type="entry name" value="RbfA_dom_sf"/>
</dbReference>
<dbReference type="InterPro" id="IPR020053">
    <property type="entry name" value="Ribosome-bd_factorA_CS"/>
</dbReference>
<dbReference type="NCBIfam" id="TIGR00082">
    <property type="entry name" value="rbfA"/>
    <property type="match status" value="1"/>
</dbReference>
<dbReference type="PANTHER" id="PTHR33515">
    <property type="entry name" value="RIBOSOME-BINDING FACTOR A, CHLOROPLASTIC-RELATED"/>
    <property type="match status" value="1"/>
</dbReference>
<dbReference type="PANTHER" id="PTHR33515:SF1">
    <property type="entry name" value="RIBOSOME-BINDING FACTOR A, CHLOROPLASTIC-RELATED"/>
    <property type="match status" value="1"/>
</dbReference>
<dbReference type="Pfam" id="PF02033">
    <property type="entry name" value="RBFA"/>
    <property type="match status" value="1"/>
</dbReference>
<dbReference type="SUPFAM" id="SSF89919">
    <property type="entry name" value="Ribosome-binding factor A, RbfA"/>
    <property type="match status" value="1"/>
</dbReference>
<dbReference type="PROSITE" id="PS01319">
    <property type="entry name" value="RBFA"/>
    <property type="match status" value="1"/>
</dbReference>
<protein>
    <recommendedName>
        <fullName evidence="1">Ribosome-binding factor A</fullName>
    </recommendedName>
</protein>
<organism>
    <name type="scientific">Nitrosospira multiformis (strain ATCC 25196 / NCIMB 11849 / C 71)</name>
    <dbReference type="NCBI Taxonomy" id="323848"/>
    <lineage>
        <taxon>Bacteria</taxon>
        <taxon>Pseudomonadati</taxon>
        <taxon>Pseudomonadota</taxon>
        <taxon>Betaproteobacteria</taxon>
        <taxon>Nitrosomonadales</taxon>
        <taxon>Nitrosomonadaceae</taxon>
        <taxon>Nitrosospira</taxon>
    </lineage>
</organism>
<evidence type="ECO:0000255" key="1">
    <source>
        <dbReference type="HAMAP-Rule" id="MF_00003"/>
    </source>
</evidence>
<proteinExistence type="inferred from homology"/>
<comment type="function">
    <text evidence="1">One of several proteins that assist in the late maturation steps of the functional core of the 30S ribosomal subunit. Associates with free 30S ribosomal subunits (but not with 30S subunits that are part of 70S ribosomes or polysomes). Required for efficient processing of 16S rRNA. May interact with the 5'-terminal helix region of 16S rRNA.</text>
</comment>
<comment type="subunit">
    <text evidence="1">Monomer. Binds 30S ribosomal subunits, but not 50S ribosomal subunits or 70S ribosomes.</text>
</comment>
<comment type="subcellular location">
    <subcellularLocation>
        <location evidence="1">Cytoplasm</location>
    </subcellularLocation>
</comment>
<comment type="similarity">
    <text evidence="1">Belongs to the RbfA family.</text>
</comment>
<gene>
    <name evidence="1" type="primary">rbfA</name>
    <name type="ordered locus">Nmul_A1863</name>
</gene>